<proteinExistence type="inferred from homology"/>
<gene>
    <name evidence="1" type="primary">rpsR</name>
    <name type="ordered locus">Sbal_3641</name>
</gene>
<dbReference type="EMBL" id="CP000563">
    <property type="protein sequence ID" value="ABN63116.1"/>
    <property type="molecule type" value="Genomic_DNA"/>
</dbReference>
<dbReference type="RefSeq" id="WP_006083042.1">
    <property type="nucleotide sequence ID" value="NC_009052.1"/>
</dbReference>
<dbReference type="SMR" id="A3D8Q3"/>
<dbReference type="STRING" id="325240.Sbal_3641"/>
<dbReference type="GeneID" id="94726693"/>
<dbReference type="KEGG" id="sbl:Sbal_3641"/>
<dbReference type="HOGENOM" id="CLU_148710_2_3_6"/>
<dbReference type="OrthoDB" id="9812008at2"/>
<dbReference type="Proteomes" id="UP000001557">
    <property type="component" value="Chromosome"/>
</dbReference>
<dbReference type="GO" id="GO:0022627">
    <property type="term" value="C:cytosolic small ribosomal subunit"/>
    <property type="evidence" value="ECO:0007669"/>
    <property type="project" value="TreeGrafter"/>
</dbReference>
<dbReference type="GO" id="GO:0070181">
    <property type="term" value="F:small ribosomal subunit rRNA binding"/>
    <property type="evidence" value="ECO:0007669"/>
    <property type="project" value="TreeGrafter"/>
</dbReference>
<dbReference type="GO" id="GO:0003735">
    <property type="term" value="F:structural constituent of ribosome"/>
    <property type="evidence" value="ECO:0007669"/>
    <property type="project" value="InterPro"/>
</dbReference>
<dbReference type="GO" id="GO:0006412">
    <property type="term" value="P:translation"/>
    <property type="evidence" value="ECO:0007669"/>
    <property type="project" value="UniProtKB-UniRule"/>
</dbReference>
<dbReference type="FunFam" id="4.10.640.10:FF:000001">
    <property type="entry name" value="30S ribosomal protein S18"/>
    <property type="match status" value="1"/>
</dbReference>
<dbReference type="Gene3D" id="4.10.640.10">
    <property type="entry name" value="Ribosomal protein S18"/>
    <property type="match status" value="1"/>
</dbReference>
<dbReference type="HAMAP" id="MF_00270">
    <property type="entry name" value="Ribosomal_bS18"/>
    <property type="match status" value="1"/>
</dbReference>
<dbReference type="InterPro" id="IPR001648">
    <property type="entry name" value="Ribosomal_bS18"/>
</dbReference>
<dbReference type="InterPro" id="IPR018275">
    <property type="entry name" value="Ribosomal_bS18_CS"/>
</dbReference>
<dbReference type="InterPro" id="IPR036870">
    <property type="entry name" value="Ribosomal_bS18_sf"/>
</dbReference>
<dbReference type="NCBIfam" id="TIGR00165">
    <property type="entry name" value="S18"/>
    <property type="match status" value="1"/>
</dbReference>
<dbReference type="PANTHER" id="PTHR13479">
    <property type="entry name" value="30S RIBOSOMAL PROTEIN S18"/>
    <property type="match status" value="1"/>
</dbReference>
<dbReference type="PANTHER" id="PTHR13479:SF40">
    <property type="entry name" value="SMALL RIBOSOMAL SUBUNIT PROTEIN BS18M"/>
    <property type="match status" value="1"/>
</dbReference>
<dbReference type="Pfam" id="PF01084">
    <property type="entry name" value="Ribosomal_S18"/>
    <property type="match status" value="1"/>
</dbReference>
<dbReference type="PRINTS" id="PR00974">
    <property type="entry name" value="RIBOSOMALS18"/>
</dbReference>
<dbReference type="SUPFAM" id="SSF46911">
    <property type="entry name" value="Ribosomal protein S18"/>
    <property type="match status" value="1"/>
</dbReference>
<dbReference type="PROSITE" id="PS00057">
    <property type="entry name" value="RIBOSOMAL_S18"/>
    <property type="match status" value="1"/>
</dbReference>
<protein>
    <recommendedName>
        <fullName evidence="1">Small ribosomal subunit protein bS18</fullName>
    </recommendedName>
    <alternativeName>
        <fullName evidence="2">30S ribosomal protein S18</fullName>
    </alternativeName>
</protein>
<comment type="function">
    <text evidence="1">Binds as a heterodimer with protein bS6 to the central domain of the 16S rRNA, where it helps stabilize the platform of the 30S subunit.</text>
</comment>
<comment type="subunit">
    <text evidence="1">Part of the 30S ribosomal subunit. Forms a tight heterodimer with protein bS6.</text>
</comment>
<comment type="similarity">
    <text evidence="1">Belongs to the bacterial ribosomal protein bS18 family.</text>
</comment>
<sequence>MARYFRRRKFCRFTAEGVAEIDYKDIVTLKNYITESGKIVPSRITGTSAKYQRQLARAIKRARYLSLLPYTDLHQ</sequence>
<feature type="chain" id="PRO_1000003600" description="Small ribosomal subunit protein bS18">
    <location>
        <begin position="1"/>
        <end position="75"/>
    </location>
</feature>
<keyword id="KW-1185">Reference proteome</keyword>
<keyword id="KW-0687">Ribonucleoprotein</keyword>
<keyword id="KW-0689">Ribosomal protein</keyword>
<keyword id="KW-0694">RNA-binding</keyword>
<keyword id="KW-0699">rRNA-binding</keyword>
<evidence type="ECO:0000255" key="1">
    <source>
        <dbReference type="HAMAP-Rule" id="MF_00270"/>
    </source>
</evidence>
<evidence type="ECO:0000305" key="2"/>
<accession>A3D8Q3</accession>
<organism>
    <name type="scientific">Shewanella baltica (strain OS155 / ATCC BAA-1091)</name>
    <dbReference type="NCBI Taxonomy" id="325240"/>
    <lineage>
        <taxon>Bacteria</taxon>
        <taxon>Pseudomonadati</taxon>
        <taxon>Pseudomonadota</taxon>
        <taxon>Gammaproteobacteria</taxon>
        <taxon>Alteromonadales</taxon>
        <taxon>Shewanellaceae</taxon>
        <taxon>Shewanella</taxon>
    </lineage>
</organism>
<reference key="1">
    <citation type="submission" date="2007-02" db="EMBL/GenBank/DDBJ databases">
        <title>Complete sequence of chromosome of Shewanella baltica OS155.</title>
        <authorList>
            <consortium name="US DOE Joint Genome Institute"/>
            <person name="Copeland A."/>
            <person name="Lucas S."/>
            <person name="Lapidus A."/>
            <person name="Barry K."/>
            <person name="Detter J.C."/>
            <person name="Glavina del Rio T."/>
            <person name="Hammon N."/>
            <person name="Israni S."/>
            <person name="Dalin E."/>
            <person name="Tice H."/>
            <person name="Pitluck S."/>
            <person name="Sims D.R."/>
            <person name="Brettin T."/>
            <person name="Bruce D."/>
            <person name="Han C."/>
            <person name="Tapia R."/>
            <person name="Brainard J."/>
            <person name="Schmutz J."/>
            <person name="Larimer F."/>
            <person name="Land M."/>
            <person name="Hauser L."/>
            <person name="Kyrpides N."/>
            <person name="Mikhailova N."/>
            <person name="Brettar I."/>
            <person name="Klappenbach J."/>
            <person name="Konstantinidis K."/>
            <person name="Rodrigues J."/>
            <person name="Tiedje J."/>
            <person name="Richardson P."/>
        </authorList>
    </citation>
    <scope>NUCLEOTIDE SEQUENCE [LARGE SCALE GENOMIC DNA]</scope>
    <source>
        <strain>OS155 / ATCC BAA-1091</strain>
    </source>
</reference>
<name>RS18_SHEB5</name>